<accession>P9WL71</accession>
<accession>L0TBR0</accession>
<accession>P65031</accession>
<accession>Q50623</accession>
<name>Y2598_MYCTU</name>
<gene>
    <name type="ordered locus">Rv2598</name>
    <name type="ORF">MTCY227.03c</name>
</gene>
<keyword id="KW-1185">Reference proteome</keyword>
<proteinExistence type="predicted"/>
<feature type="chain" id="PRO_0000104067" description="Uncharacterized protein Rv2598">
    <location>
        <begin position="1"/>
        <end position="164"/>
    </location>
</feature>
<dbReference type="EMBL" id="AL123456">
    <property type="protein sequence ID" value="CCP45394.1"/>
    <property type="molecule type" value="Genomic_DNA"/>
</dbReference>
<dbReference type="PIR" id="E70727">
    <property type="entry name" value="E70727"/>
</dbReference>
<dbReference type="RefSeq" id="NP_217114.1">
    <property type="nucleotide sequence ID" value="NC_000962.3"/>
</dbReference>
<dbReference type="RefSeq" id="WP_003413444.1">
    <property type="nucleotide sequence ID" value="NZ_NVQJ01000023.1"/>
</dbReference>
<dbReference type="STRING" id="83332.Rv2598"/>
<dbReference type="PaxDb" id="83332-Rv2598"/>
<dbReference type="DNASU" id="887689"/>
<dbReference type="GeneID" id="887689"/>
<dbReference type="KEGG" id="mtu:Rv2598"/>
<dbReference type="KEGG" id="mtv:RVBD_2598"/>
<dbReference type="TubercuList" id="Rv2598"/>
<dbReference type="eggNOG" id="ENOG5032ZD0">
    <property type="taxonomic scope" value="Bacteria"/>
</dbReference>
<dbReference type="InParanoid" id="P9WL71"/>
<dbReference type="OrthoDB" id="4462506at2"/>
<dbReference type="PhylomeDB" id="P9WL71"/>
<dbReference type="Proteomes" id="UP000001584">
    <property type="component" value="Chromosome"/>
</dbReference>
<dbReference type="InterPro" id="IPR024486">
    <property type="entry name" value="DUF2617"/>
</dbReference>
<dbReference type="Pfam" id="PF10936">
    <property type="entry name" value="DUF2617"/>
    <property type="match status" value="1"/>
</dbReference>
<protein>
    <recommendedName>
        <fullName>Uncharacterized protein Rv2598</fullName>
    </recommendedName>
</protein>
<reference key="1">
    <citation type="journal article" date="1998" name="Nature">
        <title>Deciphering the biology of Mycobacterium tuberculosis from the complete genome sequence.</title>
        <authorList>
            <person name="Cole S.T."/>
            <person name="Brosch R."/>
            <person name="Parkhill J."/>
            <person name="Garnier T."/>
            <person name="Churcher C.M."/>
            <person name="Harris D.E."/>
            <person name="Gordon S.V."/>
            <person name="Eiglmeier K."/>
            <person name="Gas S."/>
            <person name="Barry C.E. III"/>
            <person name="Tekaia F."/>
            <person name="Badcock K."/>
            <person name="Basham D."/>
            <person name="Brown D."/>
            <person name="Chillingworth T."/>
            <person name="Connor R."/>
            <person name="Davies R.M."/>
            <person name="Devlin K."/>
            <person name="Feltwell T."/>
            <person name="Gentles S."/>
            <person name="Hamlin N."/>
            <person name="Holroyd S."/>
            <person name="Hornsby T."/>
            <person name="Jagels K."/>
            <person name="Krogh A."/>
            <person name="McLean J."/>
            <person name="Moule S."/>
            <person name="Murphy L.D."/>
            <person name="Oliver S."/>
            <person name="Osborne J."/>
            <person name="Quail M.A."/>
            <person name="Rajandream M.A."/>
            <person name="Rogers J."/>
            <person name="Rutter S."/>
            <person name="Seeger K."/>
            <person name="Skelton S."/>
            <person name="Squares S."/>
            <person name="Squares R."/>
            <person name="Sulston J.E."/>
            <person name="Taylor K."/>
            <person name="Whitehead S."/>
            <person name="Barrell B.G."/>
        </authorList>
    </citation>
    <scope>NUCLEOTIDE SEQUENCE [LARGE SCALE GENOMIC DNA]</scope>
    <source>
        <strain>ATCC 25618 / H37Rv</strain>
    </source>
</reference>
<sequence>MPLHQLAIAPVDVSGALLGLVLNAPAPRPLATHRLAHTDGSALQLGVLGASHVVTVEGRFCEEVSCVARSRGGDLPESTHAPGYHLQSHTETHDEAAFRRLARHLRERCTRATGWLGGVFPGDDAALTALAAEPDGTGWRWRTWHLYPSASGGTVVHTTSRWRP</sequence>
<organism>
    <name type="scientific">Mycobacterium tuberculosis (strain ATCC 25618 / H37Rv)</name>
    <dbReference type="NCBI Taxonomy" id="83332"/>
    <lineage>
        <taxon>Bacteria</taxon>
        <taxon>Bacillati</taxon>
        <taxon>Actinomycetota</taxon>
        <taxon>Actinomycetes</taxon>
        <taxon>Mycobacteriales</taxon>
        <taxon>Mycobacteriaceae</taxon>
        <taxon>Mycobacterium</taxon>
        <taxon>Mycobacterium tuberculosis complex</taxon>
    </lineage>
</organism>